<feature type="chain" id="PRO_1000013508" description="UPF0173 metal-dependent hydrolase Pcal_1074">
    <location>
        <begin position="1"/>
        <end position="225"/>
    </location>
</feature>
<sequence length="225" mass="24435">MQIKWFGHSAFMVEAASLKLLIDPWVSNPLSPASPQEVAAAKPTHILITHDHFDHLGESVDIAKATGAPVVGTYELTLEVAEKGIPEAQTMPMNIGGTIKLGDGVEVYMTPALHTANRGAPSGFVIATPEGTVYHAGDTALFRDMELIGELYDIDVALLPIGSVFTMGPREAAIAVQLLRPRRVVPMHYNTFPLIRQDPEDFKARVEAVTRAKVYVMKPGDVLKL</sequence>
<gene>
    <name type="ordered locus">Pcal_1074</name>
</gene>
<reference key="1">
    <citation type="submission" date="2007-02" db="EMBL/GenBank/DDBJ databases">
        <title>Complete sequence of Pyrobaculum calidifontis JCM 11548.</title>
        <authorList>
            <consortium name="US DOE Joint Genome Institute"/>
            <person name="Copeland A."/>
            <person name="Lucas S."/>
            <person name="Lapidus A."/>
            <person name="Barry K."/>
            <person name="Glavina del Rio T."/>
            <person name="Dalin E."/>
            <person name="Tice H."/>
            <person name="Pitluck S."/>
            <person name="Chain P."/>
            <person name="Malfatti S."/>
            <person name="Shin M."/>
            <person name="Vergez L."/>
            <person name="Schmutz J."/>
            <person name="Larimer F."/>
            <person name="Land M."/>
            <person name="Hauser L."/>
            <person name="Kyrpides N."/>
            <person name="Mikhailova N."/>
            <person name="Cozen A.E."/>
            <person name="Fitz-Gibbon S.T."/>
            <person name="House C.H."/>
            <person name="Saltikov C."/>
            <person name="Lowe T.M."/>
            <person name="Richardson P."/>
        </authorList>
    </citation>
    <scope>NUCLEOTIDE SEQUENCE [LARGE SCALE GENOMIC DNA]</scope>
    <source>
        <strain>DSM 21063 / JCM 11548 / VA1</strain>
    </source>
</reference>
<evidence type="ECO:0000255" key="1">
    <source>
        <dbReference type="HAMAP-Rule" id="MF_00457"/>
    </source>
</evidence>
<comment type="similarity">
    <text evidence="1">Belongs to the UPF0173 family.</text>
</comment>
<accession>A3MV32</accession>
<protein>
    <recommendedName>
        <fullName evidence="1">UPF0173 metal-dependent hydrolase Pcal_1074</fullName>
    </recommendedName>
</protein>
<name>Y1074_PYRCJ</name>
<dbReference type="EMBL" id="CP000561">
    <property type="protein sequence ID" value="ABO08499.1"/>
    <property type="molecule type" value="Genomic_DNA"/>
</dbReference>
<dbReference type="RefSeq" id="WP_011849757.1">
    <property type="nucleotide sequence ID" value="NC_009073.1"/>
</dbReference>
<dbReference type="SMR" id="A3MV32"/>
<dbReference type="STRING" id="410359.Pcal_1074"/>
<dbReference type="GeneID" id="4909712"/>
<dbReference type="KEGG" id="pcl:Pcal_1074"/>
<dbReference type="eggNOG" id="arCOG00497">
    <property type="taxonomic scope" value="Archaea"/>
</dbReference>
<dbReference type="HOGENOM" id="CLU_070010_4_0_2"/>
<dbReference type="OrthoDB" id="28313at2157"/>
<dbReference type="Proteomes" id="UP000001431">
    <property type="component" value="Chromosome"/>
</dbReference>
<dbReference type="GO" id="GO:0016787">
    <property type="term" value="F:hydrolase activity"/>
    <property type="evidence" value="ECO:0007669"/>
    <property type="project" value="UniProtKB-UniRule"/>
</dbReference>
<dbReference type="Gene3D" id="3.60.15.10">
    <property type="entry name" value="Ribonuclease Z/Hydroxyacylglutathione hydrolase-like"/>
    <property type="match status" value="1"/>
</dbReference>
<dbReference type="HAMAP" id="MF_00457">
    <property type="entry name" value="UPF0173"/>
    <property type="match status" value="1"/>
</dbReference>
<dbReference type="InterPro" id="IPR001279">
    <property type="entry name" value="Metallo-B-lactamas"/>
</dbReference>
<dbReference type="InterPro" id="IPR036866">
    <property type="entry name" value="RibonucZ/Hydroxyglut_hydro"/>
</dbReference>
<dbReference type="InterPro" id="IPR022877">
    <property type="entry name" value="UPF0173"/>
</dbReference>
<dbReference type="InterPro" id="IPR050114">
    <property type="entry name" value="UPF0173_UPF0282_UlaG_hydrolase"/>
</dbReference>
<dbReference type="NCBIfam" id="NF001911">
    <property type="entry name" value="PRK00685.1"/>
    <property type="match status" value="1"/>
</dbReference>
<dbReference type="PANTHER" id="PTHR43546:SF3">
    <property type="entry name" value="UPF0173 METAL-DEPENDENT HYDROLASE MJ1163"/>
    <property type="match status" value="1"/>
</dbReference>
<dbReference type="PANTHER" id="PTHR43546">
    <property type="entry name" value="UPF0173 METAL-DEPENDENT HYDROLASE MJ1163-RELATED"/>
    <property type="match status" value="1"/>
</dbReference>
<dbReference type="Pfam" id="PF12706">
    <property type="entry name" value="Lactamase_B_2"/>
    <property type="match status" value="1"/>
</dbReference>
<dbReference type="SMART" id="SM00849">
    <property type="entry name" value="Lactamase_B"/>
    <property type="match status" value="1"/>
</dbReference>
<dbReference type="SUPFAM" id="SSF56281">
    <property type="entry name" value="Metallo-hydrolase/oxidoreductase"/>
    <property type="match status" value="1"/>
</dbReference>
<proteinExistence type="inferred from homology"/>
<organism>
    <name type="scientific">Pyrobaculum calidifontis (strain DSM 21063 / JCM 11548 / VA1)</name>
    <dbReference type="NCBI Taxonomy" id="410359"/>
    <lineage>
        <taxon>Archaea</taxon>
        <taxon>Thermoproteota</taxon>
        <taxon>Thermoprotei</taxon>
        <taxon>Thermoproteales</taxon>
        <taxon>Thermoproteaceae</taxon>
        <taxon>Pyrobaculum</taxon>
    </lineage>
</organism>
<keyword id="KW-0378">Hydrolase</keyword>